<comment type="function">
    <text evidence="2">Involved in protection of biofilms against oxidative stress.</text>
</comment>
<comment type="subcellular location">
    <subcellularLocation>
        <location evidence="1">Cell membrane</location>
        <topology evidence="1">Lipid-anchor</topology>
    </subcellularLocation>
</comment>
<comment type="induction">
    <text evidence="2">Up-regulated in biofilms.</text>
</comment>
<comment type="disruption phenotype">
    <text evidence="2">Mutant exhibits reduced microcolony formation and greatly enhanced flagellar motility. Biofilms from the mutant strain are less able to resist acid and peroxide stresses.</text>
</comment>
<comment type="similarity">
    <text evidence="3">Belongs to the BhsA/McbA family.</text>
</comment>
<comment type="sequence caution" evidence="3">
    <conflict type="erroneous initiation">
        <sequence resource="EMBL-CDS" id="AAA97085"/>
    </conflict>
    <text>Extended N-terminus.</text>
</comment>
<sequence>MVSRKRNSVIYRFASLLLVLMLSACSALQGTPQPAPPVTDHPQEIRRDQTQGLQRIGSVSTMVRGSPDDALAEIKAKAVAAKADYYVVVMVDETIVTGQWYSQAILYRK</sequence>
<feature type="signal peptide" evidence="1">
    <location>
        <begin position="1"/>
        <end position="24"/>
    </location>
</feature>
<feature type="chain" id="PRO_0000018058" description="Lipoprotein BsmA">
    <location>
        <begin position="25"/>
        <end position="109"/>
    </location>
</feature>
<feature type="lipid moiety-binding region" description="N-palmitoyl cysteine" evidence="1">
    <location>
        <position position="25"/>
    </location>
</feature>
<feature type="lipid moiety-binding region" description="S-diacylglycerol cysteine" evidence="1">
    <location>
        <position position="25"/>
    </location>
</feature>
<evidence type="ECO:0000255" key="1">
    <source>
        <dbReference type="PROSITE-ProRule" id="PRU00303"/>
    </source>
</evidence>
<evidence type="ECO:0000269" key="2">
    <source>
    </source>
</evidence>
<evidence type="ECO:0000305" key="3"/>
<dbReference type="EMBL" id="U14003">
    <property type="protein sequence ID" value="AAA97085.1"/>
    <property type="status" value="ALT_INIT"/>
    <property type="molecule type" value="Genomic_DNA"/>
</dbReference>
<dbReference type="EMBL" id="U00096">
    <property type="protein sequence ID" value="AAC77146.2"/>
    <property type="molecule type" value="Genomic_DNA"/>
</dbReference>
<dbReference type="EMBL" id="AP009048">
    <property type="protein sequence ID" value="BAE78190.1"/>
    <property type="molecule type" value="Genomic_DNA"/>
</dbReference>
<dbReference type="PIR" id="S56414">
    <property type="entry name" value="S56414"/>
</dbReference>
<dbReference type="RefSeq" id="NP_418610.4">
    <property type="nucleotide sequence ID" value="NC_000913.3"/>
</dbReference>
<dbReference type="RefSeq" id="WP_000254633.1">
    <property type="nucleotide sequence ID" value="NZ_LN832404.1"/>
</dbReference>
<dbReference type="SMR" id="P39297"/>
<dbReference type="BioGRID" id="4263355">
    <property type="interactions" value="10"/>
</dbReference>
<dbReference type="FunCoup" id="P39297">
    <property type="interactions" value="92"/>
</dbReference>
<dbReference type="STRING" id="511145.b4189"/>
<dbReference type="PaxDb" id="511145-b4189"/>
<dbReference type="DNASU" id="948708"/>
<dbReference type="EnsemblBacteria" id="AAC77146">
    <property type="protein sequence ID" value="AAC77146"/>
    <property type="gene ID" value="b4189"/>
</dbReference>
<dbReference type="GeneID" id="948708"/>
<dbReference type="KEGG" id="ecj:JW5743"/>
<dbReference type="KEGG" id="eco:b4189"/>
<dbReference type="KEGG" id="ecoc:C3026_22630"/>
<dbReference type="PATRIC" id="fig|1411691.4.peg.2512"/>
<dbReference type="EchoBASE" id="EB2382"/>
<dbReference type="eggNOG" id="COG3650">
    <property type="taxonomic scope" value="Bacteria"/>
</dbReference>
<dbReference type="HOGENOM" id="CLU_144052_1_0_6"/>
<dbReference type="InParanoid" id="P39297"/>
<dbReference type="OMA" id="DYYVIIM"/>
<dbReference type="OrthoDB" id="6415092at2"/>
<dbReference type="PhylomeDB" id="P39297"/>
<dbReference type="BioCyc" id="EcoCyc:G7852-MONOMER"/>
<dbReference type="PRO" id="PR:P39297"/>
<dbReference type="Proteomes" id="UP000000625">
    <property type="component" value="Chromosome"/>
</dbReference>
<dbReference type="GO" id="GO:0005886">
    <property type="term" value="C:plasma membrane"/>
    <property type="evidence" value="ECO:0007669"/>
    <property type="project" value="UniProtKB-SubCell"/>
</dbReference>
<dbReference type="GO" id="GO:0006974">
    <property type="term" value="P:DNA damage response"/>
    <property type="evidence" value="ECO:0000270"/>
    <property type="project" value="EcoliWiki"/>
</dbReference>
<dbReference type="GO" id="GO:0006950">
    <property type="term" value="P:response to stress"/>
    <property type="evidence" value="ECO:0000318"/>
    <property type="project" value="GO_Central"/>
</dbReference>
<dbReference type="GO" id="GO:0044010">
    <property type="term" value="P:single-species biofilm formation"/>
    <property type="evidence" value="ECO:0000270"/>
    <property type="project" value="EcoCyc"/>
</dbReference>
<dbReference type="FunFam" id="3.30.1660.10:FF:000002">
    <property type="entry name" value="Hypothetical lipoprotein yjfO"/>
    <property type="match status" value="1"/>
</dbReference>
<dbReference type="Gene3D" id="3.30.1660.10">
    <property type="entry name" value="Flavin-binding protein dodecin"/>
    <property type="match status" value="1"/>
</dbReference>
<dbReference type="InterPro" id="IPR051096">
    <property type="entry name" value="BhsA/McbA_stress_biofilm_assoc"/>
</dbReference>
<dbReference type="InterPro" id="IPR025543">
    <property type="entry name" value="Dodecin-like"/>
</dbReference>
<dbReference type="InterPro" id="IPR036275">
    <property type="entry name" value="YdgH-like_sf"/>
</dbReference>
<dbReference type="InterPro" id="IPR010854">
    <property type="entry name" value="YdgH/BhsA/McbA-like_dom"/>
</dbReference>
<dbReference type="NCBIfam" id="NF011433">
    <property type="entry name" value="PRK14864.1"/>
    <property type="match status" value="1"/>
</dbReference>
<dbReference type="PANTHER" id="PTHR34156:SF11">
    <property type="entry name" value="LIPOPROTEIN BSMA"/>
    <property type="match status" value="1"/>
</dbReference>
<dbReference type="PANTHER" id="PTHR34156">
    <property type="entry name" value="OUTER MEMBRANE PROTEIN-RELATED-RELATED"/>
    <property type="match status" value="1"/>
</dbReference>
<dbReference type="Pfam" id="PF07338">
    <property type="entry name" value="YdgH_BhsA-like"/>
    <property type="match status" value="1"/>
</dbReference>
<dbReference type="SUPFAM" id="SSF159871">
    <property type="entry name" value="YdgH-like"/>
    <property type="match status" value="1"/>
</dbReference>
<dbReference type="PROSITE" id="PS51257">
    <property type="entry name" value="PROKAR_LIPOPROTEIN"/>
    <property type="match status" value="1"/>
</dbReference>
<gene>
    <name type="primary">bsmA</name>
    <name type="synonym">yjfO</name>
    <name type="ordered locus">b4189</name>
    <name type="ordered locus">JW5743</name>
</gene>
<organism>
    <name type="scientific">Escherichia coli (strain K12)</name>
    <dbReference type="NCBI Taxonomy" id="83333"/>
    <lineage>
        <taxon>Bacteria</taxon>
        <taxon>Pseudomonadati</taxon>
        <taxon>Pseudomonadota</taxon>
        <taxon>Gammaproteobacteria</taxon>
        <taxon>Enterobacterales</taxon>
        <taxon>Enterobacteriaceae</taxon>
        <taxon>Escherichia</taxon>
    </lineage>
</organism>
<proteinExistence type="evidence at transcript level"/>
<keyword id="KW-1003">Cell membrane</keyword>
<keyword id="KW-0449">Lipoprotein</keyword>
<keyword id="KW-0472">Membrane</keyword>
<keyword id="KW-0564">Palmitate</keyword>
<keyword id="KW-1185">Reference proteome</keyword>
<keyword id="KW-0732">Signal</keyword>
<keyword id="KW-0346">Stress response</keyword>
<accession>P39297</accession>
<accession>Q2M6B6</accession>
<reference key="1">
    <citation type="journal article" date="1995" name="Nucleic Acids Res.">
        <title>Analysis of the Escherichia coli genome VI: DNA sequence of the region from 92.8 through 100 minutes.</title>
        <authorList>
            <person name="Burland V.D."/>
            <person name="Plunkett G. III"/>
            <person name="Sofia H.J."/>
            <person name="Daniels D.L."/>
            <person name="Blattner F.R."/>
        </authorList>
    </citation>
    <scope>NUCLEOTIDE SEQUENCE [LARGE SCALE GENOMIC DNA]</scope>
    <source>
        <strain>K12 / MG1655 / ATCC 47076</strain>
    </source>
</reference>
<reference key="2">
    <citation type="journal article" date="1997" name="Science">
        <title>The complete genome sequence of Escherichia coli K-12.</title>
        <authorList>
            <person name="Blattner F.R."/>
            <person name="Plunkett G. III"/>
            <person name="Bloch C.A."/>
            <person name="Perna N.T."/>
            <person name="Burland V."/>
            <person name="Riley M."/>
            <person name="Collado-Vides J."/>
            <person name="Glasner J.D."/>
            <person name="Rode C.K."/>
            <person name="Mayhew G.F."/>
            <person name="Gregor J."/>
            <person name="Davis N.W."/>
            <person name="Kirkpatrick H.A."/>
            <person name="Goeden M.A."/>
            <person name="Rose D.J."/>
            <person name="Mau B."/>
            <person name="Shao Y."/>
        </authorList>
    </citation>
    <scope>NUCLEOTIDE SEQUENCE [LARGE SCALE GENOMIC DNA]</scope>
    <source>
        <strain>K12 / MG1655 / ATCC 47076</strain>
    </source>
</reference>
<reference key="3">
    <citation type="journal article" date="2006" name="Mol. Syst. Biol.">
        <title>Highly accurate genome sequences of Escherichia coli K-12 strains MG1655 and W3110.</title>
        <authorList>
            <person name="Hayashi K."/>
            <person name="Morooka N."/>
            <person name="Yamamoto Y."/>
            <person name="Fujita K."/>
            <person name="Isono K."/>
            <person name="Choi S."/>
            <person name="Ohtsubo E."/>
            <person name="Baba T."/>
            <person name="Wanner B.L."/>
            <person name="Mori H."/>
            <person name="Horiuchi T."/>
        </authorList>
    </citation>
    <scope>NUCLEOTIDE SEQUENCE [LARGE SCALE GENOMIC DNA]</scope>
    <source>
        <strain>K12 / W3110 / ATCC 27325 / DSM 5911</strain>
    </source>
</reference>
<reference key="4">
    <citation type="journal article" date="2010" name="Microbiology">
        <title>A previously uncharacterized gene, yjfO (bsmA), influences Escherichia coli biofilm formation and stress response.</title>
        <authorList>
            <person name="Weber M.M."/>
            <person name="French C.L."/>
            <person name="Barnes M.B."/>
            <person name="Siegele D.A."/>
            <person name="McLean R.J."/>
        </authorList>
    </citation>
    <scope>FUNCTION</scope>
    <scope>INDUCTION</scope>
    <scope>DISRUPTION PHENOTYPE</scope>
    <source>
        <strain>K12 / MG1655 / ATCC 47076</strain>
    </source>
</reference>
<name>BSMA_ECOLI</name>
<protein>
    <recommendedName>
        <fullName>Lipoprotein BsmA</fullName>
    </recommendedName>
    <alternativeName>
        <fullName>Biofilm stress and motility protein</fullName>
    </alternativeName>
</protein>